<proteinExistence type="evidence at transcript level"/>
<accession>P21820</accession>
<organism>
    <name type="scientific">Coptis japonica</name>
    <name type="common">Japanese goldthread</name>
    <dbReference type="NCBI Taxonomy" id="3442"/>
    <lineage>
        <taxon>Eukaryota</taxon>
        <taxon>Viridiplantae</taxon>
        <taxon>Streptophyta</taxon>
        <taxon>Embryophyta</taxon>
        <taxon>Tracheophyta</taxon>
        <taxon>Spermatophyta</taxon>
        <taxon>Magnoliopsida</taxon>
        <taxon>Ranunculales</taxon>
        <taxon>Ranunculaceae</taxon>
        <taxon>Coptidoideae</taxon>
        <taxon>Coptis</taxon>
    </lineage>
</organism>
<feature type="chain" id="PRO_0000090145" description="Triosephosphate isomerase, cytosolic">
    <location>
        <begin position="1"/>
        <end position="253"/>
    </location>
</feature>
<feature type="active site" description="Electrophile" evidence="1">
    <location>
        <position position="96"/>
    </location>
</feature>
<feature type="active site" description="Proton acceptor" evidence="1">
    <location>
        <position position="166"/>
    </location>
</feature>
<feature type="binding site" evidence="1">
    <location>
        <position position="10"/>
    </location>
    <ligand>
        <name>substrate</name>
    </ligand>
</feature>
<feature type="binding site" evidence="1">
    <location>
        <position position="12"/>
    </location>
    <ligand>
        <name>substrate</name>
    </ligand>
</feature>
<sequence length="253" mass="27090">MGRKFFVGGNWKCNGTSEEVKKIVTLLNEAEVPSEDVVEVVVSPPYVFLPFVKNLLRADFHVAAQNCWVKKGGAFTGEVSAEMLVNLGIPWVILGHSERRALLNESNEFVGDKTAYALSQGLKVIACVGETLEQREAGSTISVVAAQTKAIAEKVSDWTNIVVAYEPVWAIGTGKVASPAQAQEVHFELRKWIKENVGADVAGSVRIIYGGSVNGANSKELAGQPDIDGFLVGGASLKPEFVDIIKSATVKSS</sequence>
<name>TPIS_COPJA</name>
<comment type="catalytic activity">
    <reaction>
        <text>D-glyceraldehyde 3-phosphate = dihydroxyacetone phosphate</text>
        <dbReference type="Rhea" id="RHEA:18585"/>
        <dbReference type="ChEBI" id="CHEBI:57642"/>
        <dbReference type="ChEBI" id="CHEBI:59776"/>
        <dbReference type="EC" id="5.3.1.1"/>
    </reaction>
</comment>
<comment type="pathway">
    <text>Carbohydrate biosynthesis; gluconeogenesis.</text>
</comment>
<comment type="pathway">
    <text>Carbohydrate degradation; glycolysis; D-glyceraldehyde 3-phosphate from glycerone phosphate: step 1/1.</text>
</comment>
<comment type="subunit">
    <text>Homodimer.</text>
</comment>
<comment type="subcellular location">
    <subcellularLocation>
        <location evidence="2">Cytoplasm</location>
    </subcellularLocation>
</comment>
<comment type="miscellaneous">
    <text>In plants, there are two types of TPIS, cytosolic and plastid.</text>
</comment>
<comment type="similarity">
    <text evidence="2">Belongs to the triosephosphate isomerase family.</text>
</comment>
<comment type="caution">
    <text evidence="3">Was originally thought to be (S)-tetrahydro-berberine oxidase (EC 1.3.3.8).</text>
</comment>
<dbReference type="EC" id="5.3.1.1"/>
<dbReference type="EMBL" id="J04121">
    <property type="protein sequence ID" value="AAB62730.1"/>
    <property type="molecule type" value="mRNA"/>
</dbReference>
<dbReference type="PIR" id="A32187">
    <property type="entry name" value="A32187"/>
</dbReference>
<dbReference type="SMR" id="P21820"/>
<dbReference type="UniPathway" id="UPA00109">
    <property type="reaction ID" value="UER00189"/>
</dbReference>
<dbReference type="UniPathway" id="UPA00138"/>
<dbReference type="GO" id="GO:0005829">
    <property type="term" value="C:cytosol"/>
    <property type="evidence" value="ECO:0007669"/>
    <property type="project" value="TreeGrafter"/>
</dbReference>
<dbReference type="GO" id="GO:0004807">
    <property type="term" value="F:triose-phosphate isomerase activity"/>
    <property type="evidence" value="ECO:0007669"/>
    <property type="project" value="UniProtKB-EC"/>
</dbReference>
<dbReference type="GO" id="GO:0006094">
    <property type="term" value="P:gluconeogenesis"/>
    <property type="evidence" value="ECO:0007669"/>
    <property type="project" value="UniProtKB-UniPathway"/>
</dbReference>
<dbReference type="GO" id="GO:0046166">
    <property type="term" value="P:glyceraldehyde-3-phosphate biosynthetic process"/>
    <property type="evidence" value="ECO:0007669"/>
    <property type="project" value="TreeGrafter"/>
</dbReference>
<dbReference type="GO" id="GO:0019563">
    <property type="term" value="P:glycerol catabolic process"/>
    <property type="evidence" value="ECO:0007669"/>
    <property type="project" value="TreeGrafter"/>
</dbReference>
<dbReference type="GO" id="GO:0006096">
    <property type="term" value="P:glycolytic process"/>
    <property type="evidence" value="ECO:0007669"/>
    <property type="project" value="UniProtKB-UniPathway"/>
</dbReference>
<dbReference type="CDD" id="cd00311">
    <property type="entry name" value="TIM"/>
    <property type="match status" value="1"/>
</dbReference>
<dbReference type="FunFam" id="3.20.20.70:FF:000025">
    <property type="entry name" value="Triosephosphate isomerase"/>
    <property type="match status" value="1"/>
</dbReference>
<dbReference type="Gene3D" id="3.20.20.70">
    <property type="entry name" value="Aldolase class I"/>
    <property type="match status" value="1"/>
</dbReference>
<dbReference type="HAMAP" id="MF_00147_B">
    <property type="entry name" value="TIM_B"/>
    <property type="match status" value="1"/>
</dbReference>
<dbReference type="InterPro" id="IPR013785">
    <property type="entry name" value="Aldolase_TIM"/>
</dbReference>
<dbReference type="InterPro" id="IPR035990">
    <property type="entry name" value="TIM_sf"/>
</dbReference>
<dbReference type="InterPro" id="IPR022896">
    <property type="entry name" value="TrioseP_Isoase_bac/euk"/>
</dbReference>
<dbReference type="InterPro" id="IPR000652">
    <property type="entry name" value="Triosephosphate_isomerase"/>
</dbReference>
<dbReference type="InterPro" id="IPR020861">
    <property type="entry name" value="Triosephosphate_isomerase_AS"/>
</dbReference>
<dbReference type="NCBIfam" id="TIGR00419">
    <property type="entry name" value="tim"/>
    <property type="match status" value="1"/>
</dbReference>
<dbReference type="PANTHER" id="PTHR21139:SF37">
    <property type="entry name" value="OS01G0841600 PROTEIN"/>
    <property type="match status" value="1"/>
</dbReference>
<dbReference type="PANTHER" id="PTHR21139">
    <property type="entry name" value="TRIOSEPHOSPHATE ISOMERASE"/>
    <property type="match status" value="1"/>
</dbReference>
<dbReference type="Pfam" id="PF00121">
    <property type="entry name" value="TIM"/>
    <property type="match status" value="1"/>
</dbReference>
<dbReference type="SUPFAM" id="SSF51351">
    <property type="entry name" value="Triosephosphate isomerase (TIM)"/>
    <property type="match status" value="1"/>
</dbReference>
<dbReference type="PROSITE" id="PS00171">
    <property type="entry name" value="TIM_1"/>
    <property type="match status" value="1"/>
</dbReference>
<dbReference type="PROSITE" id="PS51440">
    <property type="entry name" value="TIM_2"/>
    <property type="match status" value="1"/>
</dbReference>
<reference key="1">
    <citation type="journal article" date="1989" name="Proc. Natl. Acad. Sci. U.S.A.">
        <title>Isolation, sequence, and bacterial expression of a cDNA for (S)-tetrahydroberberine oxidase from cultured berberine-producing Coptis japonica cells.</title>
        <authorList>
            <person name="Okada N."/>
            <person name="Koizumi N."/>
            <person name="Tanaka T."/>
            <person name="Ohkubo H."/>
            <person name="Nakanishi S."/>
            <person name="Yamada Y."/>
        </authorList>
    </citation>
    <scope>NUCLEOTIDE SEQUENCE [MRNA]</scope>
</reference>
<reference key="2">
    <citation type="journal article" date="1990" name="Proc. Natl. Acad. Sci. U.S.A.">
        <authorList>
            <person name="Okada N."/>
            <person name="Koizumi N."/>
            <person name="Tanaka T."/>
            <person name="Ohkubo H."/>
            <person name="Nakanishi S."/>
            <person name="Yamada Y."/>
        </authorList>
    </citation>
    <scope>ERRATUM OF PUBMED:2463630</scope>
</reference>
<reference key="3">
    <citation type="journal article" date="1990" name="Agric. Biol. Chem.">
        <title>Synthesis of plant triosephosphate isomerase in Escherichia coli.</title>
        <authorList>
            <person name="Sato F."/>
            <person name="Fitchen J.H."/>
            <person name="Takeshita N."/>
            <person name="Hashimoto T."/>
            <person name="Okada N."/>
            <person name="Yamada Y."/>
        </authorList>
    </citation>
    <scope>REVISION OF FUNCTION</scope>
</reference>
<keyword id="KW-0963">Cytoplasm</keyword>
<keyword id="KW-0312">Gluconeogenesis</keyword>
<keyword id="KW-0324">Glycolysis</keyword>
<keyword id="KW-0413">Isomerase</keyword>
<evidence type="ECO:0000250" key="1"/>
<evidence type="ECO:0000305" key="2"/>
<evidence type="ECO:0000305" key="3">
    <source>
    </source>
</evidence>
<protein>
    <recommendedName>
        <fullName>Triosephosphate isomerase, cytosolic</fullName>
        <shortName>TIM</shortName>
        <shortName>Triose-phosphate isomerase</shortName>
        <ecNumber>5.3.1.1</ecNumber>
    </recommendedName>
</protein>